<proteinExistence type="evidence at transcript level"/>
<dbReference type="EMBL" id="DS231731">
    <property type="protein sequence ID" value="KNB19267.1"/>
    <property type="molecule type" value="Genomic_DNA"/>
</dbReference>
<dbReference type="RefSeq" id="XP_018257312.1">
    <property type="nucleotide sequence ID" value="XM_018396437.1"/>
</dbReference>
<dbReference type="GeneID" id="28957285"/>
<dbReference type="KEGG" id="fox:FOXG_16414"/>
<dbReference type="VEuPathDB" id="FungiDB:FOXG_16414"/>
<dbReference type="GO" id="GO:0005634">
    <property type="term" value="C:nucleus"/>
    <property type="evidence" value="ECO:0007669"/>
    <property type="project" value="UniProtKB-SubCell"/>
</dbReference>
<dbReference type="GO" id="GO:0003677">
    <property type="term" value="F:DNA binding"/>
    <property type="evidence" value="ECO:0007669"/>
    <property type="project" value="InterPro"/>
</dbReference>
<dbReference type="GO" id="GO:0000981">
    <property type="term" value="F:DNA-binding transcription factor activity, RNA polymerase II-specific"/>
    <property type="evidence" value="ECO:0007669"/>
    <property type="project" value="InterPro"/>
</dbReference>
<dbReference type="GO" id="GO:0008270">
    <property type="term" value="F:zinc ion binding"/>
    <property type="evidence" value="ECO:0007669"/>
    <property type="project" value="InterPro"/>
</dbReference>
<dbReference type="GO" id="GO:0006351">
    <property type="term" value="P:DNA-templated transcription"/>
    <property type="evidence" value="ECO:0007669"/>
    <property type="project" value="InterPro"/>
</dbReference>
<dbReference type="CDD" id="cd12148">
    <property type="entry name" value="fungal_TF_MHR"/>
    <property type="match status" value="1"/>
</dbReference>
<dbReference type="CDD" id="cd00067">
    <property type="entry name" value="GAL4"/>
    <property type="match status" value="1"/>
</dbReference>
<dbReference type="Gene3D" id="4.10.240.10">
    <property type="entry name" value="Zn(2)-C6 fungal-type DNA-binding domain"/>
    <property type="match status" value="1"/>
</dbReference>
<dbReference type="InterPro" id="IPR050815">
    <property type="entry name" value="TF_fung"/>
</dbReference>
<dbReference type="InterPro" id="IPR007219">
    <property type="entry name" value="Transcription_factor_dom_fun"/>
</dbReference>
<dbReference type="InterPro" id="IPR036864">
    <property type="entry name" value="Zn2-C6_fun-type_DNA-bd_sf"/>
</dbReference>
<dbReference type="InterPro" id="IPR001138">
    <property type="entry name" value="Zn2Cys6_DnaBD"/>
</dbReference>
<dbReference type="PANTHER" id="PTHR47338:SF27">
    <property type="entry name" value="ZN(II)2CYS6 TRANSCRIPTION FACTOR (EUROFUNG)"/>
    <property type="match status" value="1"/>
</dbReference>
<dbReference type="PANTHER" id="PTHR47338">
    <property type="entry name" value="ZN(II)2CYS6 TRANSCRIPTION FACTOR (EUROFUNG)-RELATED"/>
    <property type="match status" value="1"/>
</dbReference>
<dbReference type="Pfam" id="PF04082">
    <property type="entry name" value="Fungal_trans"/>
    <property type="match status" value="1"/>
</dbReference>
<dbReference type="Pfam" id="PF00172">
    <property type="entry name" value="Zn_clus"/>
    <property type="match status" value="1"/>
</dbReference>
<dbReference type="PRINTS" id="PR00755">
    <property type="entry name" value="AFLATOXINBRP"/>
</dbReference>
<dbReference type="SMART" id="SM00906">
    <property type="entry name" value="Fungal_trans"/>
    <property type="match status" value="1"/>
</dbReference>
<dbReference type="SMART" id="SM00066">
    <property type="entry name" value="GAL4"/>
    <property type="match status" value="1"/>
</dbReference>
<dbReference type="SUPFAM" id="SSF57701">
    <property type="entry name" value="Zn2/Cys6 DNA-binding domain"/>
    <property type="match status" value="1"/>
</dbReference>
<dbReference type="PROSITE" id="PS00463">
    <property type="entry name" value="ZN2_CY6_FUNGAL_1"/>
    <property type="match status" value="1"/>
</dbReference>
<dbReference type="PROSITE" id="PS50048">
    <property type="entry name" value="ZN2_CY6_FUNGAL_2"/>
    <property type="match status" value="1"/>
</dbReference>
<feature type="chain" id="PRO_0000462485" description="Zn(2)-C6 fungal-type transcription factor FTF1c">
    <location>
        <begin position="1"/>
        <end position="930"/>
    </location>
</feature>
<feature type="DNA-binding region" description="Zn(2)-C6 fungal-type" evidence="1">
    <location>
        <begin position="137"/>
        <end position="164"/>
    </location>
</feature>
<reference key="1">
    <citation type="journal article" date="2010" name="Nature">
        <title>Comparative genomics reveals mobile pathogenicity chromosomes in Fusarium.</title>
        <authorList>
            <person name="Ma L.-J."/>
            <person name="van der Does H.C."/>
            <person name="Borkovich K.A."/>
            <person name="Coleman J.J."/>
            <person name="Daboussi M.-J."/>
            <person name="Di Pietro A."/>
            <person name="Dufresne M."/>
            <person name="Freitag M."/>
            <person name="Grabherr M."/>
            <person name="Henrissat B."/>
            <person name="Houterman P.M."/>
            <person name="Kang S."/>
            <person name="Shim W.-B."/>
            <person name="Woloshuk C."/>
            <person name="Xie X."/>
            <person name="Xu J.-R."/>
            <person name="Antoniw J."/>
            <person name="Baker S.E."/>
            <person name="Bluhm B.H."/>
            <person name="Breakspear A."/>
            <person name="Brown D.W."/>
            <person name="Butchko R.A.E."/>
            <person name="Chapman S."/>
            <person name="Coulson R."/>
            <person name="Coutinho P.M."/>
            <person name="Danchin E.G.J."/>
            <person name="Diener A."/>
            <person name="Gale L.R."/>
            <person name="Gardiner D.M."/>
            <person name="Goff S."/>
            <person name="Hammond-Kosack K.E."/>
            <person name="Hilburn K."/>
            <person name="Hua-Van A."/>
            <person name="Jonkers W."/>
            <person name="Kazan K."/>
            <person name="Kodira C.D."/>
            <person name="Koehrsen M."/>
            <person name="Kumar L."/>
            <person name="Lee Y.-H."/>
            <person name="Li L."/>
            <person name="Manners J.M."/>
            <person name="Miranda-Saavedra D."/>
            <person name="Mukherjee M."/>
            <person name="Park G."/>
            <person name="Park J."/>
            <person name="Park S.-Y."/>
            <person name="Proctor R.H."/>
            <person name="Regev A."/>
            <person name="Ruiz-Roldan M.C."/>
            <person name="Sain D."/>
            <person name="Sakthikumar S."/>
            <person name="Sykes S."/>
            <person name="Schwartz D.C."/>
            <person name="Turgeon B.G."/>
            <person name="Wapinski I."/>
            <person name="Yoder O."/>
            <person name="Young S."/>
            <person name="Zeng Q."/>
            <person name="Zhou S."/>
            <person name="Galagan J."/>
            <person name="Cuomo C.A."/>
            <person name="Kistler H.C."/>
            <person name="Rep M."/>
        </authorList>
    </citation>
    <scope>NUCLEOTIDE SEQUENCE [LARGE SCALE GENOMIC DNA]</scope>
    <source>
        <strain>4287 / CBS 123668 / FGSC 9935 / NRRL 34936</strain>
    </source>
</reference>
<reference key="2">
    <citation type="journal article" date="2007" name="Fungal Genet. Biol.">
        <title>The gene coding for a new transcription factor (ftf1) of Fusarium oxysporum is only expressed during infection of common bean.</title>
        <authorList>
            <person name="Ramos B."/>
            <person name="Alves-Santos F.M."/>
            <person name="Garcia-Sanchez M.A."/>
            <person name="Martin-Rodrigues N."/>
            <person name="Eslava A.P."/>
            <person name="Diaz-Minguez J.M."/>
        </authorList>
    </citation>
    <scope>FUNCTION</scope>
    <scope>INDUCTION</scope>
</reference>
<reference key="3">
    <citation type="journal article" date="2016" name="Mol. Plant Pathol.">
        <title>The FTF gene family regulates virulence and expression of SIX effectors in Fusarium oxysporum.</title>
        <authorList>
            <person name="Nino-Sanchez J."/>
            <person name="Casado-Del Castillo V."/>
            <person name="Tello V."/>
            <person name="De Vega-Bartol J.J."/>
            <person name="Ramos B."/>
            <person name="Sukno S.A."/>
            <person name="Diaz Minguez J.M."/>
        </authorList>
    </citation>
    <scope>FUNCTION</scope>
</reference>
<organism>
    <name type="scientific">Fusarium oxysporum f. sp. lycopersici (strain 4287 / CBS 123668 / FGSC 9935 / NRRL 34936)</name>
    <name type="common">Fusarium vascular wilt of tomato</name>
    <dbReference type="NCBI Taxonomy" id="426428"/>
    <lineage>
        <taxon>Eukaryota</taxon>
        <taxon>Fungi</taxon>
        <taxon>Dikarya</taxon>
        <taxon>Ascomycota</taxon>
        <taxon>Pezizomycotina</taxon>
        <taxon>Sordariomycetes</taxon>
        <taxon>Hypocreomycetidae</taxon>
        <taxon>Hypocreales</taxon>
        <taxon>Nectriaceae</taxon>
        <taxon>Fusarium</taxon>
        <taxon>Fusarium oxysporum species complex</taxon>
    </lineage>
</organism>
<accession>A0A0J9WVC0</accession>
<comment type="function">
    <text evidence="2 3">Zn(2)-C6 fungal-type transcription factor that has a role in the establishment of the fungus within the plant and/or the progress of the disease (PubMed:17462924, PubMed:26817616). Regulates the expression of virulence factors such as SIX1 and SIX6 (PubMed:26817616).</text>
</comment>
<comment type="subcellular location">
    <subcellularLocation>
        <location evidence="1">Nucleus</location>
    </subcellularLocation>
</comment>
<comment type="induction">
    <text evidence="2">Exclusively expressed during infection of common bean.</text>
</comment>
<comment type="miscellaneous">
    <text evidence="2">Multiple copies of the gene are present in highly virulent fusarium oxysporum strains.</text>
</comment>
<protein>
    <recommendedName>
        <fullName evidence="4">Zn(2)-C6 fungal-type transcription factor FTF1c</fullName>
    </recommendedName>
    <alternativeName>
        <fullName evidence="4">Fusarium transcription factor 1c</fullName>
    </alternativeName>
</protein>
<evidence type="ECO:0000255" key="1">
    <source>
        <dbReference type="PROSITE-ProRule" id="PRU00227"/>
    </source>
</evidence>
<evidence type="ECO:0000269" key="2">
    <source>
    </source>
</evidence>
<evidence type="ECO:0000269" key="3">
    <source>
    </source>
</evidence>
<evidence type="ECO:0000303" key="4">
    <source>
    </source>
</evidence>
<name>TF1C2_FUSO4</name>
<gene>
    <name evidence="4" type="primary">FTF1c</name>
    <name type="ORF">FOXG_16414</name>
</gene>
<keyword id="KW-0238">DNA-binding</keyword>
<keyword id="KW-0479">Metal-binding</keyword>
<keyword id="KW-0539">Nucleus</keyword>
<keyword id="KW-0804">Transcription</keyword>
<keyword id="KW-0805">Transcription regulation</keyword>
<keyword id="KW-0843">Virulence</keyword>
<keyword id="KW-0862">Zinc</keyword>
<sequence length="930" mass="103685">MDFTQLDDFAFAYYGLPDQSSLVSLVDQTHTFQSPTAFPQHQAMSGLAHSGLPFGTLPTGNRSQSMEGSKAPPDRTSPASNALEDSTTDEFGLASRNRADGTDLGVKPKEDKADATAAWSGLRTKAGKERRRLPLACIACRRKKIRCSGEKPACEHCLCSYIPCVYKVTTRKAGPRTDYMAMLDKRPKRMEERVIKAISKLDEEVASSVTCPVVKSAIPGTVPSSKPTKKRSAEEAFGPDLETWAKVPSEPKIEGDDGSSSLQVQGKEGNKLQQEGTEALPSQEIQEHLAELFFDNICGQSYHLLHKPSYMRKLKNGTLPPVLVLTVCAVAARFTSSPLVNSSRPEFLRGEEWASHARDICTRRYECPNLTILTCLLILGLHEFGTCQGGRSWALSGQAIRMAFALQLHKDLEYDPSGRNGTKTQLSFIDREIRRRIMWACFLMDRFNSFETDRPMFIREDTIELPLPVKEKYFQFDMPAPTEMLDGRVPHPPSPKDGQIADTRENMGVAAFLIRAIALWGRIITYLSQGCKDLDPNPLWEDKSHYMKHLNDIVNLEASLPLSLKYSAENLEVHKTEKTPSQFLLMHLCLQHNILFVSRAAMSARKQHGVHVDFFSEASKRTFNAANRISELLREAEQSGCFVSAPFAGYCAFSSTTVHILGIMSRNPSMKLTAQANLTTNVKYLHKMKKYWGMFHWMVENVRTQYRNVLDAMRAGANVEERATQPSFLQYGDWFNRYPRGLFDAEFMDPATHKRKDSGADGVLEAKPELRSVEEYFTLPTPRRVENKDTIRAAAPKRKQSAKKQTGMPAQPGQHLDSLQIIEPDAVSQEHKFSGGLGLQITGVAGFNPLAASKTQIPDFSTTMSPMSPANMTPFAQHAHTHTFFPPELLAMNFGQGSNGNTDPLDRQLIYGGYLMDASTGLGDGYTWAL</sequence>